<feature type="chain" id="PRO_0000266855" description="Probable GTP-binding protein EngB">
    <location>
        <begin position="1"/>
        <end position="200"/>
    </location>
</feature>
<feature type="domain" description="EngB-type G" evidence="1">
    <location>
        <begin position="26"/>
        <end position="200"/>
    </location>
</feature>
<feature type="binding site" evidence="1">
    <location>
        <begin position="34"/>
        <end position="41"/>
    </location>
    <ligand>
        <name>GTP</name>
        <dbReference type="ChEBI" id="CHEBI:37565"/>
    </ligand>
</feature>
<feature type="binding site" evidence="1">
    <location>
        <position position="41"/>
    </location>
    <ligand>
        <name>Mg(2+)</name>
        <dbReference type="ChEBI" id="CHEBI:18420"/>
    </ligand>
</feature>
<feature type="binding site" evidence="1">
    <location>
        <begin position="61"/>
        <end position="65"/>
    </location>
    <ligand>
        <name>GTP</name>
        <dbReference type="ChEBI" id="CHEBI:37565"/>
    </ligand>
</feature>
<feature type="binding site" evidence="1">
    <location>
        <position position="63"/>
    </location>
    <ligand>
        <name>Mg(2+)</name>
        <dbReference type="ChEBI" id="CHEBI:18420"/>
    </ligand>
</feature>
<feature type="binding site" evidence="1">
    <location>
        <begin position="80"/>
        <end position="83"/>
    </location>
    <ligand>
        <name>GTP</name>
        <dbReference type="ChEBI" id="CHEBI:37565"/>
    </ligand>
</feature>
<feature type="binding site" evidence="1">
    <location>
        <begin position="147"/>
        <end position="150"/>
    </location>
    <ligand>
        <name>GTP</name>
        <dbReference type="ChEBI" id="CHEBI:37565"/>
    </ligand>
</feature>
<feature type="binding site" evidence="1">
    <location>
        <begin position="179"/>
        <end position="181"/>
    </location>
    <ligand>
        <name>GTP</name>
        <dbReference type="ChEBI" id="CHEBI:37565"/>
    </ligand>
</feature>
<dbReference type="EMBL" id="CP000236">
    <property type="protein sequence ID" value="ABD45005.1"/>
    <property type="molecule type" value="Genomic_DNA"/>
</dbReference>
<dbReference type="RefSeq" id="WP_011452704.1">
    <property type="nucleotide sequence ID" value="NC_007799.1"/>
</dbReference>
<dbReference type="SMR" id="Q2GGM7"/>
<dbReference type="STRING" id="205920.ECH_0595"/>
<dbReference type="KEGG" id="ech:ECH_0595"/>
<dbReference type="eggNOG" id="COG0218">
    <property type="taxonomic scope" value="Bacteria"/>
</dbReference>
<dbReference type="HOGENOM" id="CLU_033732_2_0_5"/>
<dbReference type="OrthoDB" id="9804921at2"/>
<dbReference type="Proteomes" id="UP000008320">
    <property type="component" value="Chromosome"/>
</dbReference>
<dbReference type="GO" id="GO:0005525">
    <property type="term" value="F:GTP binding"/>
    <property type="evidence" value="ECO:0007669"/>
    <property type="project" value="UniProtKB-UniRule"/>
</dbReference>
<dbReference type="GO" id="GO:0046872">
    <property type="term" value="F:metal ion binding"/>
    <property type="evidence" value="ECO:0007669"/>
    <property type="project" value="UniProtKB-KW"/>
</dbReference>
<dbReference type="GO" id="GO:0000917">
    <property type="term" value="P:division septum assembly"/>
    <property type="evidence" value="ECO:0007669"/>
    <property type="project" value="UniProtKB-KW"/>
</dbReference>
<dbReference type="CDD" id="cd01876">
    <property type="entry name" value="YihA_EngB"/>
    <property type="match status" value="1"/>
</dbReference>
<dbReference type="Gene3D" id="3.40.50.300">
    <property type="entry name" value="P-loop containing nucleotide triphosphate hydrolases"/>
    <property type="match status" value="1"/>
</dbReference>
<dbReference type="HAMAP" id="MF_00321">
    <property type="entry name" value="GTPase_EngB"/>
    <property type="match status" value="1"/>
</dbReference>
<dbReference type="InterPro" id="IPR030393">
    <property type="entry name" value="G_ENGB_dom"/>
</dbReference>
<dbReference type="InterPro" id="IPR006073">
    <property type="entry name" value="GTP-bd"/>
</dbReference>
<dbReference type="InterPro" id="IPR019987">
    <property type="entry name" value="GTP-bd_ribosome_bio_YsxC"/>
</dbReference>
<dbReference type="InterPro" id="IPR027417">
    <property type="entry name" value="P-loop_NTPase"/>
</dbReference>
<dbReference type="InterPro" id="IPR005225">
    <property type="entry name" value="Small_GTP-bd"/>
</dbReference>
<dbReference type="NCBIfam" id="TIGR03598">
    <property type="entry name" value="GTPase_YsxC"/>
    <property type="match status" value="1"/>
</dbReference>
<dbReference type="NCBIfam" id="TIGR00231">
    <property type="entry name" value="small_GTP"/>
    <property type="match status" value="1"/>
</dbReference>
<dbReference type="PANTHER" id="PTHR11649:SF13">
    <property type="entry name" value="ENGB-TYPE G DOMAIN-CONTAINING PROTEIN"/>
    <property type="match status" value="1"/>
</dbReference>
<dbReference type="PANTHER" id="PTHR11649">
    <property type="entry name" value="MSS1/TRME-RELATED GTP-BINDING PROTEIN"/>
    <property type="match status" value="1"/>
</dbReference>
<dbReference type="Pfam" id="PF01926">
    <property type="entry name" value="MMR_HSR1"/>
    <property type="match status" value="1"/>
</dbReference>
<dbReference type="SUPFAM" id="SSF52540">
    <property type="entry name" value="P-loop containing nucleoside triphosphate hydrolases"/>
    <property type="match status" value="1"/>
</dbReference>
<dbReference type="PROSITE" id="PS51706">
    <property type="entry name" value="G_ENGB"/>
    <property type="match status" value="1"/>
</dbReference>
<organism>
    <name type="scientific">Ehrlichia chaffeensis (strain ATCC CRL-10679 / Arkansas)</name>
    <dbReference type="NCBI Taxonomy" id="205920"/>
    <lineage>
        <taxon>Bacteria</taxon>
        <taxon>Pseudomonadati</taxon>
        <taxon>Pseudomonadota</taxon>
        <taxon>Alphaproteobacteria</taxon>
        <taxon>Rickettsiales</taxon>
        <taxon>Anaplasmataceae</taxon>
        <taxon>Ehrlichia</taxon>
    </lineage>
</organism>
<accession>Q2GGM7</accession>
<reference key="1">
    <citation type="journal article" date="2006" name="PLoS Genet.">
        <title>Comparative genomics of emerging human ehrlichiosis agents.</title>
        <authorList>
            <person name="Dunning Hotopp J.C."/>
            <person name="Lin M."/>
            <person name="Madupu R."/>
            <person name="Crabtree J."/>
            <person name="Angiuoli S.V."/>
            <person name="Eisen J.A."/>
            <person name="Seshadri R."/>
            <person name="Ren Q."/>
            <person name="Wu M."/>
            <person name="Utterback T.R."/>
            <person name="Smith S."/>
            <person name="Lewis M."/>
            <person name="Khouri H."/>
            <person name="Zhang C."/>
            <person name="Niu H."/>
            <person name="Lin Q."/>
            <person name="Ohashi N."/>
            <person name="Zhi N."/>
            <person name="Nelson W.C."/>
            <person name="Brinkac L.M."/>
            <person name="Dodson R.J."/>
            <person name="Rosovitz M.J."/>
            <person name="Sundaram J.P."/>
            <person name="Daugherty S.C."/>
            <person name="Davidsen T."/>
            <person name="Durkin A.S."/>
            <person name="Gwinn M.L."/>
            <person name="Haft D.H."/>
            <person name="Selengut J.D."/>
            <person name="Sullivan S.A."/>
            <person name="Zafar N."/>
            <person name="Zhou L."/>
            <person name="Benahmed F."/>
            <person name="Forberger H."/>
            <person name="Halpin R."/>
            <person name="Mulligan S."/>
            <person name="Robinson J."/>
            <person name="White O."/>
            <person name="Rikihisa Y."/>
            <person name="Tettelin H."/>
        </authorList>
    </citation>
    <scope>NUCLEOTIDE SEQUENCE [LARGE SCALE GENOMIC DNA]</scope>
    <source>
        <strain>ATCC CRL-10679 / Arkansas</strain>
    </source>
</reference>
<comment type="function">
    <text evidence="1">Necessary for normal cell division and for the maintenance of normal septation.</text>
</comment>
<comment type="cofactor">
    <cofactor evidence="1">
        <name>Mg(2+)</name>
        <dbReference type="ChEBI" id="CHEBI:18420"/>
    </cofactor>
</comment>
<comment type="similarity">
    <text evidence="1">Belongs to the TRAFAC class TrmE-Era-EngA-EngB-Septin-like GTPase superfamily. EngB GTPase family.</text>
</comment>
<sequence>MKLKTIMSKCEFMIGATHIKSLPDFSIPEIAIAGRSNVGKSSLINAITNNKKNAKTSSKPGCTKQINFYLINKDFMVLVDLPGYGYSKADKTTINNYLCLMEYYLLNSRNLLKVILLIDAKVGFKEIDLDFINWLELHQIHYQLVLTKIDKIKKEMLDVNVNYIKNLNLDFIMYPIISTSSQCKQGIEELIYEIAQCIKK</sequence>
<evidence type="ECO:0000255" key="1">
    <source>
        <dbReference type="HAMAP-Rule" id="MF_00321"/>
    </source>
</evidence>
<name>ENGB_EHRCR</name>
<protein>
    <recommendedName>
        <fullName evidence="1">Probable GTP-binding protein EngB</fullName>
    </recommendedName>
</protein>
<proteinExistence type="inferred from homology"/>
<gene>
    <name evidence="1" type="primary">engB</name>
    <name type="ordered locus">ECH_0595</name>
</gene>
<keyword id="KW-0131">Cell cycle</keyword>
<keyword id="KW-0132">Cell division</keyword>
<keyword id="KW-0342">GTP-binding</keyword>
<keyword id="KW-0460">Magnesium</keyword>
<keyword id="KW-0479">Metal-binding</keyword>
<keyword id="KW-0547">Nucleotide-binding</keyword>
<keyword id="KW-1185">Reference proteome</keyword>
<keyword id="KW-0717">Septation</keyword>